<accession>P32321</accession>
<accession>B2R836</accession>
<accession>D3DP49</accession>
<accession>D3DP50</accession>
<accession>Q5M7Z8</accession>
<accession>Q9BVD8</accession>
<sequence length="178" mass="20016">MSEVSCKKRDDYLEWPEYFMAVAFLSAQRSKDPNSQVGACIVNSENKIVGIGYNGMPNGCSDDVLPWRRTAENKLDTKYPYVCHAELNAIMNKNSTDVKGCSMYVALFPCNECAKLIIQAGIKEVIFMSDKYHDSDEATAARLLFNMAGVTFRKFIPKCSKIVIDFDSINSRPSQKLQ</sequence>
<keyword id="KW-0002">3D-structure</keyword>
<keyword id="KW-0021">Allosteric enzyme</keyword>
<keyword id="KW-0025">Alternative splicing</keyword>
<keyword id="KW-0903">Direct protein sequencing</keyword>
<keyword id="KW-0378">Hydrolase</keyword>
<keyword id="KW-0479">Metal-binding</keyword>
<keyword id="KW-0545">Nucleotide biosynthesis</keyword>
<keyword id="KW-0597">Phosphoprotein</keyword>
<keyword id="KW-1267">Proteomics identification</keyword>
<keyword id="KW-1185">Reference proteome</keyword>
<keyword id="KW-0862">Zinc</keyword>
<evidence type="ECO:0000255" key="1">
    <source>
        <dbReference type="PROSITE-ProRule" id="PRU01083"/>
    </source>
</evidence>
<evidence type="ECO:0000269" key="2">
    <source>
    </source>
</evidence>
<evidence type="ECO:0000269" key="3">
    <source>
    </source>
</evidence>
<evidence type="ECO:0000269" key="4">
    <source ref="11"/>
</evidence>
<evidence type="ECO:0000303" key="5">
    <source>
    </source>
</evidence>
<evidence type="ECO:0000303" key="6">
    <source>
    </source>
</evidence>
<evidence type="ECO:0000305" key="7"/>
<evidence type="ECO:0000305" key="8">
    <source>
    </source>
</evidence>
<evidence type="ECO:0000312" key="9">
    <source>
        <dbReference type="HGNC" id="HGNC:2710"/>
    </source>
</evidence>
<evidence type="ECO:0007744" key="10">
    <source>
        <dbReference type="PDB" id="2W4L"/>
    </source>
</evidence>
<evidence type="ECO:0007744" key="11">
    <source>
    </source>
</evidence>
<evidence type="ECO:0007829" key="12">
    <source>
        <dbReference type="PDB" id="2W4L"/>
    </source>
</evidence>
<dbReference type="EC" id="3.5.4.12" evidence="3"/>
<dbReference type="EMBL" id="L12136">
    <property type="protein sequence ID" value="AAA35755.1"/>
    <property type="molecule type" value="mRNA"/>
</dbReference>
<dbReference type="EMBL" id="L39874">
    <property type="protein sequence ID" value="AAC37579.1"/>
    <property type="molecule type" value="Genomic_DNA"/>
</dbReference>
<dbReference type="EMBL" id="AK313221">
    <property type="protein sequence ID" value="BAG36033.1"/>
    <property type="molecule type" value="mRNA"/>
</dbReference>
<dbReference type="EMBL" id="AC079766">
    <property type="status" value="NOT_ANNOTATED_CDS"/>
    <property type="molecule type" value="Genomic_DNA"/>
</dbReference>
<dbReference type="EMBL" id="CH471056">
    <property type="protein sequence ID" value="EAX04697.1"/>
    <property type="molecule type" value="Genomic_DNA"/>
</dbReference>
<dbReference type="EMBL" id="CH471056">
    <property type="protein sequence ID" value="EAX04698.1"/>
    <property type="molecule type" value="Genomic_DNA"/>
</dbReference>
<dbReference type="EMBL" id="CH471056">
    <property type="protein sequence ID" value="EAX04700.1"/>
    <property type="molecule type" value="Genomic_DNA"/>
</dbReference>
<dbReference type="EMBL" id="CH471056">
    <property type="protein sequence ID" value="EAX04701.1"/>
    <property type="molecule type" value="Genomic_DNA"/>
</dbReference>
<dbReference type="EMBL" id="BC001286">
    <property type="protein sequence ID" value="AAH01286.1"/>
    <property type="molecule type" value="mRNA"/>
</dbReference>
<dbReference type="EMBL" id="BC088357">
    <property type="protein sequence ID" value="AAH88357.2"/>
    <property type="molecule type" value="mRNA"/>
</dbReference>
<dbReference type="CCDS" id="CCDS34108.1">
    <molecule id="P32321-2"/>
</dbReference>
<dbReference type="CCDS" id="CCDS3831.1">
    <molecule id="P32321-1"/>
</dbReference>
<dbReference type="PIR" id="A47288">
    <property type="entry name" value="A47288"/>
</dbReference>
<dbReference type="PIR" id="I55434">
    <property type="entry name" value="I55434"/>
</dbReference>
<dbReference type="RefSeq" id="NP_001012750.1">
    <molecule id="P32321-2"/>
    <property type="nucleotide sequence ID" value="NM_001012732.2"/>
</dbReference>
<dbReference type="RefSeq" id="NP_001338672.1">
    <molecule id="P32321-1"/>
    <property type="nucleotide sequence ID" value="NM_001351743.2"/>
</dbReference>
<dbReference type="RefSeq" id="NP_001338673.1">
    <molecule id="P32321-1"/>
    <property type="nucleotide sequence ID" value="NM_001351744.2"/>
</dbReference>
<dbReference type="RefSeq" id="NP_001338674.1">
    <molecule id="P32321-1"/>
    <property type="nucleotide sequence ID" value="NM_001351745.2"/>
</dbReference>
<dbReference type="RefSeq" id="NP_001338676.1">
    <molecule id="P32321-1"/>
    <property type="nucleotide sequence ID" value="NM_001351747.2"/>
</dbReference>
<dbReference type="RefSeq" id="NP_001338677.1">
    <molecule id="P32321-1"/>
    <property type="nucleotide sequence ID" value="NM_001351748.2"/>
</dbReference>
<dbReference type="RefSeq" id="NP_001338679.1">
    <molecule id="P32321-1"/>
    <property type="nucleotide sequence ID" value="NM_001351750.2"/>
</dbReference>
<dbReference type="RefSeq" id="NP_001338682.1">
    <molecule id="P32321-1"/>
    <property type="nucleotide sequence ID" value="NM_001351753.2"/>
</dbReference>
<dbReference type="RefSeq" id="NP_001912.2">
    <molecule id="P32321-1"/>
    <property type="nucleotide sequence ID" value="NM_001921.3"/>
</dbReference>
<dbReference type="RefSeq" id="XP_005262836.1">
    <property type="nucleotide sequence ID" value="XM_005262779.3"/>
</dbReference>
<dbReference type="RefSeq" id="XP_005262837.1">
    <property type="nucleotide sequence ID" value="XM_005262780.3"/>
</dbReference>
<dbReference type="RefSeq" id="XP_011529976.1">
    <property type="nucleotide sequence ID" value="XM_011531674.2"/>
</dbReference>
<dbReference type="RefSeq" id="XP_016863305.1">
    <property type="nucleotide sequence ID" value="XM_017007816.1"/>
</dbReference>
<dbReference type="RefSeq" id="XP_016863306.1">
    <property type="nucleotide sequence ID" value="XM_017007817.1"/>
</dbReference>
<dbReference type="RefSeq" id="XP_016863307.1">
    <property type="nucleotide sequence ID" value="XM_017007818.1"/>
</dbReference>
<dbReference type="RefSeq" id="XP_016863308.1">
    <property type="nucleotide sequence ID" value="XM_017007819.1"/>
</dbReference>
<dbReference type="RefSeq" id="XP_016863309.1">
    <molecule id="P32321-1"/>
    <property type="nucleotide sequence ID" value="XM_017007820.3"/>
</dbReference>
<dbReference type="RefSeq" id="XP_016863310.1">
    <property type="nucleotide sequence ID" value="XM_017007821.1"/>
</dbReference>
<dbReference type="RefSeq" id="XP_016863311.1">
    <property type="nucleotide sequence ID" value="XM_017007822.1"/>
</dbReference>
<dbReference type="RefSeq" id="XP_054205045.1">
    <molecule id="P32321-1"/>
    <property type="nucleotide sequence ID" value="XM_054349070.1"/>
</dbReference>
<dbReference type="PDB" id="2W4L">
    <property type="method" value="X-ray"/>
    <property type="resolution" value="2.10 A"/>
    <property type="chains" value="A/B/C/D/E/F=5-173"/>
</dbReference>
<dbReference type="PDBsum" id="2W4L"/>
<dbReference type="SMR" id="P32321"/>
<dbReference type="BioGRID" id="108003">
    <property type="interactions" value="31"/>
</dbReference>
<dbReference type="FunCoup" id="P32321">
    <property type="interactions" value="1031"/>
</dbReference>
<dbReference type="IntAct" id="P32321">
    <property type="interactions" value="17"/>
</dbReference>
<dbReference type="MINT" id="P32321"/>
<dbReference type="STRING" id="9606.ENSP00000349576"/>
<dbReference type="ChEMBL" id="CHEMBL5675"/>
<dbReference type="DrugBank" id="DB00987">
    <property type="generic name" value="Cytarabine"/>
</dbReference>
<dbReference type="GlyGen" id="P32321">
    <property type="glycosylation" value="1 site, 1 O-linked glycan (1 site)"/>
</dbReference>
<dbReference type="iPTMnet" id="P32321"/>
<dbReference type="MetOSite" id="P32321"/>
<dbReference type="PhosphoSitePlus" id="P32321"/>
<dbReference type="BioMuta" id="DCTD"/>
<dbReference type="DMDM" id="23503055"/>
<dbReference type="jPOST" id="P32321"/>
<dbReference type="MassIVE" id="P32321"/>
<dbReference type="PaxDb" id="9606-ENSP00000349576"/>
<dbReference type="PeptideAtlas" id="P32321"/>
<dbReference type="ProteomicsDB" id="54870">
    <molecule id="P32321-1"/>
</dbReference>
<dbReference type="ProteomicsDB" id="54871">
    <molecule id="P32321-2"/>
</dbReference>
<dbReference type="Pumba" id="P32321"/>
<dbReference type="Antibodypedia" id="28704">
    <property type="antibodies" value="194 antibodies from 24 providers"/>
</dbReference>
<dbReference type="DNASU" id="1635"/>
<dbReference type="Ensembl" id="ENST00000357067.7">
    <molecule id="P32321-2"/>
    <property type="protein sequence ID" value="ENSP00000349576.3"/>
    <property type="gene ID" value="ENSG00000129187.15"/>
</dbReference>
<dbReference type="Ensembl" id="ENST00000438320.7">
    <molecule id="P32321-1"/>
    <property type="protein sequence ID" value="ENSP00000398194.2"/>
    <property type="gene ID" value="ENSG00000129187.15"/>
</dbReference>
<dbReference type="Ensembl" id="ENST00000510370.5">
    <molecule id="P32321-1"/>
    <property type="protein sequence ID" value="ENSP00000424017.1"/>
    <property type="gene ID" value="ENSG00000129187.15"/>
</dbReference>
<dbReference type="GeneID" id="1635"/>
<dbReference type="KEGG" id="hsa:1635"/>
<dbReference type="MANE-Select" id="ENST00000438320.7">
    <property type="protein sequence ID" value="ENSP00000398194.2"/>
    <property type="RefSeq nucleotide sequence ID" value="NM_001921.3"/>
    <property type="RefSeq protein sequence ID" value="NP_001912.2"/>
</dbReference>
<dbReference type="UCSC" id="uc003ivf.4">
    <molecule id="P32321-1"/>
    <property type="organism name" value="human"/>
</dbReference>
<dbReference type="AGR" id="HGNC:2710"/>
<dbReference type="CTD" id="1635"/>
<dbReference type="DisGeNET" id="1635"/>
<dbReference type="GeneCards" id="DCTD"/>
<dbReference type="HGNC" id="HGNC:2710">
    <property type="gene designation" value="DCTD"/>
</dbReference>
<dbReference type="HPA" id="ENSG00000129187">
    <property type="expression patterns" value="Low tissue specificity"/>
</dbReference>
<dbReference type="MIM" id="607638">
    <property type="type" value="gene"/>
</dbReference>
<dbReference type="neXtProt" id="NX_P32321"/>
<dbReference type="OpenTargets" id="ENSG00000129187"/>
<dbReference type="PharmGKB" id="PA138"/>
<dbReference type="VEuPathDB" id="HostDB:ENSG00000129187"/>
<dbReference type="eggNOG" id="KOG3127">
    <property type="taxonomic scope" value="Eukaryota"/>
</dbReference>
<dbReference type="GeneTree" id="ENSGT00940000153676"/>
<dbReference type="InParanoid" id="P32321"/>
<dbReference type="OrthoDB" id="6710946at2759"/>
<dbReference type="PAN-GO" id="P32321">
    <property type="GO annotations" value="3 GO annotations based on evolutionary models"/>
</dbReference>
<dbReference type="PhylomeDB" id="P32321"/>
<dbReference type="TreeFam" id="TF105971"/>
<dbReference type="BioCyc" id="MetaCyc:HS05252-MONOMER"/>
<dbReference type="PathwayCommons" id="P32321"/>
<dbReference type="Reactome" id="R-HSA-499943">
    <property type="pathway name" value="Interconversion of nucleotide di- and triphosphates"/>
</dbReference>
<dbReference type="SABIO-RK" id="P32321"/>
<dbReference type="SignaLink" id="P32321"/>
<dbReference type="BioGRID-ORCS" id="1635">
    <property type="hits" value="17 hits in 1165 CRISPR screens"/>
</dbReference>
<dbReference type="ChiTaRS" id="DCTD">
    <property type="organism name" value="human"/>
</dbReference>
<dbReference type="EvolutionaryTrace" id="P32321"/>
<dbReference type="GenomeRNAi" id="1635"/>
<dbReference type="Pharos" id="P32321">
    <property type="development level" value="Tbio"/>
</dbReference>
<dbReference type="PRO" id="PR:P32321"/>
<dbReference type="Proteomes" id="UP000005640">
    <property type="component" value="Chromosome 4"/>
</dbReference>
<dbReference type="RNAct" id="P32321">
    <property type="molecule type" value="protein"/>
</dbReference>
<dbReference type="Bgee" id="ENSG00000129187">
    <property type="expression patterns" value="Expressed in stromal cell of endometrium and 198 other cell types or tissues"/>
</dbReference>
<dbReference type="ExpressionAtlas" id="P32321">
    <property type="expression patterns" value="baseline and differential"/>
</dbReference>
<dbReference type="GO" id="GO:0005737">
    <property type="term" value="C:cytoplasm"/>
    <property type="evidence" value="ECO:0000318"/>
    <property type="project" value="GO_Central"/>
</dbReference>
<dbReference type="GO" id="GO:0005829">
    <property type="term" value="C:cytosol"/>
    <property type="evidence" value="ECO:0000304"/>
    <property type="project" value="Reactome"/>
</dbReference>
<dbReference type="GO" id="GO:0070694">
    <property type="term" value="F:5-hydroxymethyl-dUMP N-hydrolase activity"/>
    <property type="evidence" value="ECO:0000314"/>
    <property type="project" value="UniProtKB"/>
</dbReference>
<dbReference type="GO" id="GO:0004132">
    <property type="term" value="F:dCMP deaminase activity"/>
    <property type="evidence" value="ECO:0000318"/>
    <property type="project" value="GO_Central"/>
</dbReference>
<dbReference type="GO" id="GO:0042802">
    <property type="term" value="F:identical protein binding"/>
    <property type="evidence" value="ECO:0000353"/>
    <property type="project" value="IntAct"/>
</dbReference>
<dbReference type="GO" id="GO:0008270">
    <property type="term" value="F:zinc ion binding"/>
    <property type="evidence" value="ECO:0007669"/>
    <property type="project" value="InterPro"/>
</dbReference>
<dbReference type="GO" id="GO:0009972">
    <property type="term" value="P:cytidine deamination"/>
    <property type="evidence" value="ECO:0000318"/>
    <property type="project" value="GO_Central"/>
</dbReference>
<dbReference type="GO" id="GO:0006231">
    <property type="term" value="P:dTMP biosynthetic process"/>
    <property type="evidence" value="ECO:0000318"/>
    <property type="project" value="GO_Central"/>
</dbReference>
<dbReference type="GO" id="GO:0006226">
    <property type="term" value="P:dUMP biosynthetic process"/>
    <property type="evidence" value="ECO:0000318"/>
    <property type="project" value="GO_Central"/>
</dbReference>
<dbReference type="GO" id="GO:0043174">
    <property type="term" value="P:nucleoside salvage"/>
    <property type="evidence" value="ECO:0000315"/>
    <property type="project" value="UniProtKB"/>
</dbReference>
<dbReference type="GO" id="GO:0006220">
    <property type="term" value="P:pyrimidine nucleotide metabolic process"/>
    <property type="evidence" value="ECO:0000304"/>
    <property type="project" value="ProtInc"/>
</dbReference>
<dbReference type="CDD" id="cd01286">
    <property type="entry name" value="deoxycytidylate_deaminase"/>
    <property type="match status" value="1"/>
</dbReference>
<dbReference type="FunFam" id="3.40.140.10:FF:000021">
    <property type="entry name" value="Deoxycytidylate deaminase"/>
    <property type="match status" value="1"/>
</dbReference>
<dbReference type="Gene3D" id="3.40.140.10">
    <property type="entry name" value="Cytidine Deaminase, domain 2"/>
    <property type="match status" value="1"/>
</dbReference>
<dbReference type="InterPro" id="IPR016192">
    <property type="entry name" value="APOBEC/CMP_deaminase_Zn-bd"/>
</dbReference>
<dbReference type="InterPro" id="IPR002125">
    <property type="entry name" value="CMP_dCMP_dom"/>
</dbReference>
<dbReference type="InterPro" id="IPR016193">
    <property type="entry name" value="Cytidine_deaminase-like"/>
</dbReference>
<dbReference type="InterPro" id="IPR016473">
    <property type="entry name" value="dCMP_deaminase"/>
</dbReference>
<dbReference type="InterPro" id="IPR015517">
    <property type="entry name" value="dCMP_deaminase-rel"/>
</dbReference>
<dbReference type="InterPro" id="IPR035105">
    <property type="entry name" value="Deoxycytidylate_deaminase_dom"/>
</dbReference>
<dbReference type="PANTHER" id="PTHR11086:SF18">
    <property type="entry name" value="DEOXYCYTIDYLATE DEAMINASE"/>
    <property type="match status" value="1"/>
</dbReference>
<dbReference type="PANTHER" id="PTHR11086">
    <property type="entry name" value="DEOXYCYTIDYLATE DEAMINASE-RELATED"/>
    <property type="match status" value="1"/>
</dbReference>
<dbReference type="Pfam" id="PF00383">
    <property type="entry name" value="dCMP_cyt_deam_1"/>
    <property type="match status" value="1"/>
</dbReference>
<dbReference type="PIRSF" id="PIRSF006019">
    <property type="entry name" value="dCMP_deaminase"/>
    <property type="match status" value="1"/>
</dbReference>
<dbReference type="SUPFAM" id="SSF53927">
    <property type="entry name" value="Cytidine deaminase-like"/>
    <property type="match status" value="1"/>
</dbReference>
<dbReference type="PROSITE" id="PS00903">
    <property type="entry name" value="CYT_DCMP_DEAMINASES_1"/>
    <property type="match status" value="1"/>
</dbReference>
<dbReference type="PROSITE" id="PS51747">
    <property type="entry name" value="CYT_DCMP_DEAMINASES_2"/>
    <property type="match status" value="1"/>
</dbReference>
<protein>
    <recommendedName>
        <fullName evidence="8">Deoxycytidylate deaminase</fullName>
        <ecNumber evidence="3">3.5.4.12</ecNumber>
    </recommendedName>
    <alternativeName>
        <fullName evidence="6">dCMP deaminase</fullName>
    </alternativeName>
</protein>
<reference key="1">
    <citation type="journal article" date="1993" name="J. Biol. Chem.">
        <title>Primary structure of human deoxycytidylate deaminase and overexpression of its functional protein in Escherichia coli.</title>
        <authorList>
            <person name="Weiner K.X."/>
            <person name="Weiner R.S."/>
            <person name="Maley F."/>
            <person name="Maley G.F."/>
        </authorList>
    </citation>
    <scope>NUCLEOTIDE SEQUENCE [MRNA] (ISOFORM 1)</scope>
    <scope>PARTIAL PROTEIN SEQUENCE</scope>
    <scope>FUNCTION</scope>
    <scope>CATALYTIC ACTIVITY</scope>
    <scope>ACTIVITY REGULATION</scope>
</reference>
<reference key="2">
    <citation type="journal article" date="1995" name="J. Biol. Chem.">
        <title>Chromosomal location and structural organization of the human deoxycytidylate deaminase gene.</title>
        <authorList>
            <person name="Weiner K.X."/>
            <person name="Ciesla J."/>
            <person name="Jaffe A.B."/>
            <person name="Ketring R."/>
            <person name="Maley F."/>
            <person name="Maley G.F."/>
        </authorList>
    </citation>
    <scope>NUCLEOTIDE SEQUENCE [GENOMIC DNA]</scope>
    <source>
        <tissue>Lung</tissue>
    </source>
</reference>
<reference key="3">
    <citation type="journal article" date="2004" name="Nat. Genet.">
        <title>Complete sequencing and characterization of 21,243 full-length human cDNAs.</title>
        <authorList>
            <person name="Ota T."/>
            <person name="Suzuki Y."/>
            <person name="Nishikawa T."/>
            <person name="Otsuki T."/>
            <person name="Sugiyama T."/>
            <person name="Irie R."/>
            <person name="Wakamatsu A."/>
            <person name="Hayashi K."/>
            <person name="Sato H."/>
            <person name="Nagai K."/>
            <person name="Kimura K."/>
            <person name="Makita H."/>
            <person name="Sekine M."/>
            <person name="Obayashi M."/>
            <person name="Nishi T."/>
            <person name="Shibahara T."/>
            <person name="Tanaka T."/>
            <person name="Ishii S."/>
            <person name="Yamamoto J."/>
            <person name="Saito K."/>
            <person name="Kawai Y."/>
            <person name="Isono Y."/>
            <person name="Nakamura Y."/>
            <person name="Nagahari K."/>
            <person name="Murakami K."/>
            <person name="Yasuda T."/>
            <person name="Iwayanagi T."/>
            <person name="Wagatsuma M."/>
            <person name="Shiratori A."/>
            <person name="Sudo H."/>
            <person name="Hosoiri T."/>
            <person name="Kaku Y."/>
            <person name="Kodaira H."/>
            <person name="Kondo H."/>
            <person name="Sugawara M."/>
            <person name="Takahashi M."/>
            <person name="Kanda K."/>
            <person name="Yokoi T."/>
            <person name="Furuya T."/>
            <person name="Kikkawa E."/>
            <person name="Omura Y."/>
            <person name="Abe K."/>
            <person name="Kamihara K."/>
            <person name="Katsuta N."/>
            <person name="Sato K."/>
            <person name="Tanikawa M."/>
            <person name="Yamazaki M."/>
            <person name="Ninomiya K."/>
            <person name="Ishibashi T."/>
            <person name="Yamashita H."/>
            <person name="Murakawa K."/>
            <person name="Fujimori K."/>
            <person name="Tanai H."/>
            <person name="Kimata M."/>
            <person name="Watanabe M."/>
            <person name="Hiraoka S."/>
            <person name="Chiba Y."/>
            <person name="Ishida S."/>
            <person name="Ono Y."/>
            <person name="Takiguchi S."/>
            <person name="Watanabe S."/>
            <person name="Yosida M."/>
            <person name="Hotuta T."/>
            <person name="Kusano J."/>
            <person name="Kanehori K."/>
            <person name="Takahashi-Fujii A."/>
            <person name="Hara H."/>
            <person name="Tanase T.-O."/>
            <person name="Nomura Y."/>
            <person name="Togiya S."/>
            <person name="Komai F."/>
            <person name="Hara R."/>
            <person name="Takeuchi K."/>
            <person name="Arita M."/>
            <person name="Imose N."/>
            <person name="Musashino K."/>
            <person name="Yuuki H."/>
            <person name="Oshima A."/>
            <person name="Sasaki N."/>
            <person name="Aotsuka S."/>
            <person name="Yoshikawa Y."/>
            <person name="Matsunawa H."/>
            <person name="Ichihara T."/>
            <person name="Shiohata N."/>
            <person name="Sano S."/>
            <person name="Moriya S."/>
            <person name="Momiyama H."/>
            <person name="Satoh N."/>
            <person name="Takami S."/>
            <person name="Terashima Y."/>
            <person name="Suzuki O."/>
            <person name="Nakagawa S."/>
            <person name="Senoh A."/>
            <person name="Mizoguchi H."/>
            <person name="Goto Y."/>
            <person name="Shimizu F."/>
            <person name="Wakebe H."/>
            <person name="Hishigaki H."/>
            <person name="Watanabe T."/>
            <person name="Sugiyama A."/>
            <person name="Takemoto M."/>
            <person name="Kawakami B."/>
            <person name="Yamazaki M."/>
            <person name="Watanabe K."/>
            <person name="Kumagai A."/>
            <person name="Itakura S."/>
            <person name="Fukuzumi Y."/>
            <person name="Fujimori Y."/>
            <person name="Komiyama M."/>
            <person name="Tashiro H."/>
            <person name="Tanigami A."/>
            <person name="Fujiwara T."/>
            <person name="Ono T."/>
            <person name="Yamada K."/>
            <person name="Fujii Y."/>
            <person name="Ozaki K."/>
            <person name="Hirao M."/>
            <person name="Ohmori Y."/>
            <person name="Kawabata A."/>
            <person name="Hikiji T."/>
            <person name="Kobatake N."/>
            <person name="Inagaki H."/>
            <person name="Ikema Y."/>
            <person name="Okamoto S."/>
            <person name="Okitani R."/>
            <person name="Kawakami T."/>
            <person name="Noguchi S."/>
            <person name="Itoh T."/>
            <person name="Shigeta K."/>
            <person name="Senba T."/>
            <person name="Matsumura K."/>
            <person name="Nakajima Y."/>
            <person name="Mizuno T."/>
            <person name="Morinaga M."/>
            <person name="Sasaki M."/>
            <person name="Togashi T."/>
            <person name="Oyama M."/>
            <person name="Hata H."/>
            <person name="Watanabe M."/>
            <person name="Komatsu T."/>
            <person name="Mizushima-Sugano J."/>
            <person name="Satoh T."/>
            <person name="Shirai Y."/>
            <person name="Takahashi Y."/>
            <person name="Nakagawa K."/>
            <person name="Okumura K."/>
            <person name="Nagase T."/>
            <person name="Nomura N."/>
            <person name="Kikuchi H."/>
            <person name="Masuho Y."/>
            <person name="Yamashita R."/>
            <person name="Nakai K."/>
            <person name="Yada T."/>
            <person name="Nakamura Y."/>
            <person name="Ohara O."/>
            <person name="Isogai T."/>
            <person name="Sugano S."/>
        </authorList>
    </citation>
    <scope>NUCLEOTIDE SEQUENCE [LARGE SCALE MRNA] (ISOFORM 1)</scope>
</reference>
<reference key="4">
    <citation type="journal article" date="2005" name="Nature">
        <title>Generation and annotation of the DNA sequences of human chromosomes 2 and 4.</title>
        <authorList>
            <person name="Hillier L.W."/>
            <person name="Graves T.A."/>
            <person name="Fulton R.S."/>
            <person name="Fulton L.A."/>
            <person name="Pepin K.H."/>
            <person name="Minx P."/>
            <person name="Wagner-McPherson C."/>
            <person name="Layman D."/>
            <person name="Wylie K."/>
            <person name="Sekhon M."/>
            <person name="Becker M.C."/>
            <person name="Fewell G.A."/>
            <person name="Delehaunty K.D."/>
            <person name="Miner T.L."/>
            <person name="Nash W.E."/>
            <person name="Kremitzki C."/>
            <person name="Oddy L."/>
            <person name="Du H."/>
            <person name="Sun H."/>
            <person name="Bradshaw-Cordum H."/>
            <person name="Ali J."/>
            <person name="Carter J."/>
            <person name="Cordes M."/>
            <person name="Harris A."/>
            <person name="Isak A."/>
            <person name="van Brunt A."/>
            <person name="Nguyen C."/>
            <person name="Du F."/>
            <person name="Courtney L."/>
            <person name="Kalicki J."/>
            <person name="Ozersky P."/>
            <person name="Abbott S."/>
            <person name="Armstrong J."/>
            <person name="Belter E.A."/>
            <person name="Caruso L."/>
            <person name="Cedroni M."/>
            <person name="Cotton M."/>
            <person name="Davidson T."/>
            <person name="Desai A."/>
            <person name="Elliott G."/>
            <person name="Erb T."/>
            <person name="Fronick C."/>
            <person name="Gaige T."/>
            <person name="Haakenson W."/>
            <person name="Haglund K."/>
            <person name="Holmes A."/>
            <person name="Harkins R."/>
            <person name="Kim K."/>
            <person name="Kruchowski S.S."/>
            <person name="Strong C.M."/>
            <person name="Grewal N."/>
            <person name="Goyea E."/>
            <person name="Hou S."/>
            <person name="Levy A."/>
            <person name="Martinka S."/>
            <person name="Mead K."/>
            <person name="McLellan M.D."/>
            <person name="Meyer R."/>
            <person name="Randall-Maher J."/>
            <person name="Tomlinson C."/>
            <person name="Dauphin-Kohlberg S."/>
            <person name="Kozlowicz-Reilly A."/>
            <person name="Shah N."/>
            <person name="Swearengen-Shahid S."/>
            <person name="Snider J."/>
            <person name="Strong J.T."/>
            <person name="Thompson J."/>
            <person name="Yoakum M."/>
            <person name="Leonard S."/>
            <person name="Pearman C."/>
            <person name="Trani L."/>
            <person name="Radionenko M."/>
            <person name="Waligorski J.E."/>
            <person name="Wang C."/>
            <person name="Rock S.M."/>
            <person name="Tin-Wollam A.-M."/>
            <person name="Maupin R."/>
            <person name="Latreille P."/>
            <person name="Wendl M.C."/>
            <person name="Yang S.-P."/>
            <person name="Pohl C."/>
            <person name="Wallis J.W."/>
            <person name="Spieth J."/>
            <person name="Bieri T.A."/>
            <person name="Berkowicz N."/>
            <person name="Nelson J.O."/>
            <person name="Osborne J."/>
            <person name="Ding L."/>
            <person name="Meyer R."/>
            <person name="Sabo A."/>
            <person name="Shotland Y."/>
            <person name="Sinha P."/>
            <person name="Wohldmann P.E."/>
            <person name="Cook L.L."/>
            <person name="Hickenbotham M.T."/>
            <person name="Eldred J."/>
            <person name="Williams D."/>
            <person name="Jones T.A."/>
            <person name="She X."/>
            <person name="Ciccarelli F.D."/>
            <person name="Izaurralde E."/>
            <person name="Taylor J."/>
            <person name="Schmutz J."/>
            <person name="Myers R.M."/>
            <person name="Cox D.R."/>
            <person name="Huang X."/>
            <person name="McPherson J.D."/>
            <person name="Mardis E.R."/>
            <person name="Clifton S.W."/>
            <person name="Warren W.C."/>
            <person name="Chinwalla A.T."/>
            <person name="Eddy S.R."/>
            <person name="Marra M.A."/>
            <person name="Ovcharenko I."/>
            <person name="Furey T.S."/>
            <person name="Miller W."/>
            <person name="Eichler E.E."/>
            <person name="Bork P."/>
            <person name="Suyama M."/>
            <person name="Torrents D."/>
            <person name="Waterston R.H."/>
            <person name="Wilson R.K."/>
        </authorList>
    </citation>
    <scope>NUCLEOTIDE SEQUENCE [LARGE SCALE GENOMIC DNA]</scope>
</reference>
<reference key="5">
    <citation type="submission" date="2005-09" db="EMBL/GenBank/DDBJ databases">
        <authorList>
            <person name="Mural R.J."/>
            <person name="Istrail S."/>
            <person name="Sutton G.G."/>
            <person name="Florea L."/>
            <person name="Halpern A.L."/>
            <person name="Mobarry C.M."/>
            <person name="Lippert R."/>
            <person name="Walenz B."/>
            <person name="Shatkay H."/>
            <person name="Dew I."/>
            <person name="Miller J.R."/>
            <person name="Flanigan M.J."/>
            <person name="Edwards N.J."/>
            <person name="Bolanos R."/>
            <person name="Fasulo D."/>
            <person name="Halldorsson B.V."/>
            <person name="Hannenhalli S."/>
            <person name="Turner R."/>
            <person name="Yooseph S."/>
            <person name="Lu F."/>
            <person name="Nusskern D.R."/>
            <person name="Shue B.C."/>
            <person name="Zheng X.H."/>
            <person name="Zhong F."/>
            <person name="Delcher A.L."/>
            <person name="Huson D.H."/>
            <person name="Kravitz S.A."/>
            <person name="Mouchard L."/>
            <person name="Reinert K."/>
            <person name="Remington K.A."/>
            <person name="Clark A.G."/>
            <person name="Waterman M.S."/>
            <person name="Eichler E.E."/>
            <person name="Adams M.D."/>
            <person name="Hunkapiller M.W."/>
            <person name="Myers E.W."/>
            <person name="Venter J.C."/>
        </authorList>
    </citation>
    <scope>NUCLEOTIDE SEQUENCE [LARGE SCALE GENOMIC DNA]</scope>
</reference>
<reference key="6">
    <citation type="journal article" date="2004" name="Genome Res.">
        <title>The status, quality, and expansion of the NIH full-length cDNA project: the Mammalian Gene Collection (MGC).</title>
        <authorList>
            <consortium name="The MGC Project Team"/>
        </authorList>
    </citation>
    <scope>NUCLEOTIDE SEQUENCE [LARGE SCALE MRNA] (ISOFORMS 1 AND 2)</scope>
    <source>
        <tissue>Cervix</tissue>
        <tissue>Testis</tissue>
    </source>
</reference>
<reference key="7">
    <citation type="journal article" date="2011" name="BMC Syst. Biol.">
        <title>Initial characterization of the human central proteome.</title>
        <authorList>
            <person name="Burkard T.R."/>
            <person name="Planyavsky M."/>
            <person name="Kaupe I."/>
            <person name="Breitwieser F.P."/>
            <person name="Buerckstuemmer T."/>
            <person name="Bennett K.L."/>
            <person name="Superti-Furga G."/>
            <person name="Colinge J."/>
        </authorList>
    </citation>
    <scope>IDENTIFICATION BY MASS SPECTROMETRY [LARGE SCALE ANALYSIS]</scope>
</reference>
<reference key="8">
    <citation type="journal article" date="2013" name="J. Proteome Res.">
        <title>Toward a comprehensive characterization of a human cancer cell phosphoproteome.</title>
        <authorList>
            <person name="Zhou H."/>
            <person name="Di Palma S."/>
            <person name="Preisinger C."/>
            <person name="Peng M."/>
            <person name="Polat A.N."/>
            <person name="Heck A.J."/>
            <person name="Mohammed S."/>
        </authorList>
    </citation>
    <scope>PHOSPHORYLATION [LARGE SCALE ANALYSIS] AT SER-174</scope>
    <scope>IDENTIFICATION BY MASS SPECTROMETRY [LARGE SCALE ANALYSIS]</scope>
    <source>
        <tissue>Erythroleukemia</tissue>
    </source>
</reference>
<reference key="9">
    <citation type="journal article" date="2014" name="J. Proteomics">
        <title>An enzyme assisted RP-RPLC approach for in-depth analysis of human liver phosphoproteome.</title>
        <authorList>
            <person name="Bian Y."/>
            <person name="Song C."/>
            <person name="Cheng K."/>
            <person name="Dong M."/>
            <person name="Wang F."/>
            <person name="Huang J."/>
            <person name="Sun D."/>
            <person name="Wang L."/>
            <person name="Ye M."/>
            <person name="Zou H."/>
        </authorList>
    </citation>
    <scope>IDENTIFICATION BY MASS SPECTROMETRY [LARGE SCALE ANALYSIS]</scope>
    <source>
        <tissue>Liver</tissue>
    </source>
</reference>
<reference key="10">
    <citation type="journal article" date="2021" name="Science">
        <title>Targeting the nucleotide salvage factor DNPH1 sensitizes BRCA-deficient cells to PARP inhibitors.</title>
        <authorList>
            <person name="Fugger K."/>
            <person name="Bajrami I."/>
            <person name="Silva Dos Santos M."/>
            <person name="Young S.J."/>
            <person name="Kunzelmann S."/>
            <person name="Kelly G."/>
            <person name="Hewitt G."/>
            <person name="Patel H."/>
            <person name="Goldstone R."/>
            <person name="Carell T."/>
            <person name="Boulton S.J."/>
            <person name="MacRae J."/>
            <person name="Taylor I.A."/>
            <person name="West S.C."/>
        </authorList>
    </citation>
    <scope>FUNCTION</scope>
    <scope>CATALYTIC ACTIVITY</scope>
</reference>
<reference evidence="10" key="11">
    <citation type="submission" date="2008-11" db="PDB data bank">
        <title>The crystal structure of human dCMP deaminase.</title>
        <authorList>
            <consortium name="Structural genomics consortium (SGC)"/>
        </authorList>
    </citation>
    <scope>X-RAY CRYSTALLOGRAPHY (2.10 ANGSTROMS) OF 5-173 IN COMPLEX WITH ZINC</scope>
</reference>
<name>DCTD_HUMAN</name>
<feature type="chain" id="PRO_0000171691" description="Deoxycytidylate deaminase">
    <location>
        <begin position="1"/>
        <end position="178"/>
    </location>
</feature>
<feature type="domain" description="CMP/dCMP-type deaminase" evidence="1">
    <location>
        <begin position="14"/>
        <end position="145"/>
    </location>
</feature>
<feature type="active site" description="Proton donor" evidence="1">
    <location>
        <position position="86"/>
    </location>
</feature>
<feature type="binding site" evidence="4 10">
    <location>
        <position position="84"/>
    </location>
    <ligand>
        <name>Zn(2+)</name>
        <dbReference type="ChEBI" id="CHEBI:29105"/>
        <note>catalytic</note>
    </ligand>
</feature>
<feature type="binding site" evidence="4 10">
    <location>
        <position position="110"/>
    </location>
    <ligand>
        <name>Zn(2+)</name>
        <dbReference type="ChEBI" id="CHEBI:29105"/>
        <note>catalytic</note>
    </ligand>
</feature>
<feature type="binding site" evidence="4 10">
    <location>
        <position position="113"/>
    </location>
    <ligand>
        <name>Zn(2+)</name>
        <dbReference type="ChEBI" id="CHEBI:29105"/>
        <note>catalytic</note>
    </ligand>
</feature>
<feature type="modified residue" description="Phosphoserine" evidence="11">
    <location>
        <position position="174"/>
    </location>
</feature>
<feature type="splice variant" id="VSP_038094" description="In isoform 2." evidence="5">
    <original>M</original>
    <variation>MVGGGQPCGPNM</variation>
    <location>
        <position position="1"/>
    </location>
</feature>
<feature type="sequence conflict" description="In Ref. 6; AAH01286." evidence="7" ref="6">
    <original>S</original>
    <variation>L</variation>
    <location>
        <position position="95"/>
    </location>
</feature>
<feature type="sequence conflict" description="In Ref. 1; AAA35755." evidence="7" ref="1">
    <original>M</original>
    <variation>T</variation>
    <location>
        <position position="128"/>
    </location>
</feature>
<feature type="helix" evidence="12">
    <location>
        <begin position="15"/>
        <end position="27"/>
    </location>
</feature>
<feature type="strand" evidence="12">
    <location>
        <begin position="38"/>
        <end position="42"/>
    </location>
</feature>
<feature type="strand" evidence="12">
    <location>
        <begin position="48"/>
        <end position="55"/>
    </location>
</feature>
<feature type="turn" evidence="12">
    <location>
        <begin position="62"/>
        <end position="64"/>
    </location>
</feature>
<feature type="helix" evidence="12">
    <location>
        <begin position="74"/>
        <end position="76"/>
    </location>
</feature>
<feature type="turn" evidence="12">
    <location>
        <begin position="79"/>
        <end position="81"/>
    </location>
</feature>
<feature type="helix" evidence="12">
    <location>
        <begin position="85"/>
        <end position="91"/>
    </location>
</feature>
<feature type="strand" evidence="12">
    <location>
        <begin position="102"/>
        <end position="107"/>
    </location>
</feature>
<feature type="helix" evidence="12">
    <location>
        <begin position="111"/>
        <end position="119"/>
    </location>
</feature>
<feature type="strand" evidence="12">
    <location>
        <begin position="124"/>
        <end position="129"/>
    </location>
</feature>
<feature type="turn" evidence="12">
    <location>
        <begin position="131"/>
        <end position="134"/>
    </location>
</feature>
<feature type="helix" evidence="12">
    <location>
        <begin position="136"/>
        <end position="148"/>
    </location>
</feature>
<feature type="strand" evidence="12">
    <location>
        <begin position="151"/>
        <end position="154"/>
    </location>
</feature>
<feature type="strand" evidence="12">
    <location>
        <begin position="160"/>
        <end position="165"/>
    </location>
</feature>
<feature type="helix" evidence="12">
    <location>
        <begin position="166"/>
        <end position="168"/>
    </location>
</feature>
<comment type="function">
    <text evidence="2 3">Catalyzes the deamination of dCMP to dUMP, providing the nucleoside monophosphate substrate for the thymidylate synthase/TYMS (PubMed:7685356). Also, part of a nucleotide salvage pathway that eliminates epigenetically modified 5-hydroxymethyl-dCMP (hmdCMP) in a two-step process entailing deamination to cytotoxic 5-hydroxymethyl-dUMP (hmdUMP), followed by its hydrolysis into 5-hydroxymethyluracil (hmU) and 2-deoxy-D-ribose 5-phosphate (deoxyribosephosphate) (PubMed:33833118). Catalyzes the first step in that pathway, the deamination of 5-hydroxymethyl-dCMP (hmdCMP) (PubMed:33833118).</text>
</comment>
<comment type="catalytic activity">
    <reaction evidence="3">
        <text>dCMP + H2O + H(+) = dUMP + NH4(+)</text>
        <dbReference type="Rhea" id="RHEA:22924"/>
        <dbReference type="ChEBI" id="CHEBI:15377"/>
        <dbReference type="ChEBI" id="CHEBI:15378"/>
        <dbReference type="ChEBI" id="CHEBI:28938"/>
        <dbReference type="ChEBI" id="CHEBI:57566"/>
        <dbReference type="ChEBI" id="CHEBI:246422"/>
        <dbReference type="EC" id="3.5.4.12"/>
    </reaction>
    <physiologicalReaction direction="left-to-right" evidence="8">
        <dbReference type="Rhea" id="RHEA:22925"/>
    </physiologicalReaction>
</comment>
<comment type="catalytic activity">
    <reaction evidence="2">
        <text>5-hydroxymethyl-dCMP + H2O + H(+) = 5-hydroxymethyl-dUMP + NH4(+)</text>
        <dbReference type="Rhea" id="RHEA:77175"/>
        <dbReference type="ChEBI" id="CHEBI:15377"/>
        <dbReference type="ChEBI" id="CHEBI:15378"/>
        <dbReference type="ChEBI" id="CHEBI:28938"/>
        <dbReference type="ChEBI" id="CHEBI:57962"/>
        <dbReference type="ChEBI" id="CHEBI:90409"/>
    </reaction>
    <physiologicalReaction direction="left-to-right" evidence="2">
        <dbReference type="Rhea" id="RHEA:77176"/>
    </physiologicalReaction>
</comment>
<comment type="cofactor">
    <cofactor evidence="4">
        <name>Zn(2+)</name>
        <dbReference type="ChEBI" id="CHEBI:29105"/>
    </cofactor>
</comment>
<comment type="activity regulation">
    <text evidence="3">Allosteric enzyme whose activity is greatly influenced by the end products of its metabolic pathway, dCTP and dTTP.</text>
</comment>
<comment type="subunit">
    <text evidence="4">Homohexamer.</text>
</comment>
<comment type="interaction">
    <interactant intactId="EBI-739870">
        <id>P32321</id>
    </interactant>
    <interactant intactId="EBI-12007918">
        <id>O00154-4</id>
        <label>ACOT7</label>
    </interactant>
    <organismsDiffer>false</organismsDiffer>
    <experiments>3</experiments>
</comment>
<comment type="interaction">
    <interactant intactId="EBI-739870">
        <id>P32321</id>
    </interactant>
    <interactant intactId="EBI-739870">
        <id>P32321</id>
        <label>DCTD</label>
    </interactant>
    <organismsDiffer>false</organismsDiffer>
    <experiments>5</experiments>
</comment>
<comment type="interaction">
    <interactant intactId="EBI-739870">
        <id>P32321</id>
    </interactant>
    <interactant intactId="EBI-6657662">
        <id>P61328</id>
        <label>FGF12</label>
    </interactant>
    <organismsDiffer>false</organismsDiffer>
    <experiments>3</experiments>
</comment>
<comment type="interaction">
    <interactant intactId="EBI-739870">
        <id>P32321</id>
    </interactant>
    <interactant intactId="EBI-739467">
        <id>Q9H8Y8</id>
        <label>GORASP2</label>
    </interactant>
    <organismsDiffer>false</organismsDiffer>
    <experiments>7</experiments>
</comment>
<comment type="interaction">
    <interactant intactId="EBI-739870">
        <id>P32321</id>
    </interactant>
    <interactant intactId="EBI-2339737">
        <id>Q96EH3</id>
        <label>MALSU1</label>
    </interactant>
    <organismsDiffer>false</organismsDiffer>
    <experiments>6</experiments>
</comment>
<comment type="interaction">
    <interactant intactId="EBI-739870">
        <id>P32321</id>
    </interactant>
    <interactant intactId="EBI-79165">
        <id>Q9NRD5</id>
        <label>PICK1</label>
    </interactant>
    <organismsDiffer>false</organismsDiffer>
    <experiments>3</experiments>
</comment>
<comment type="interaction">
    <interactant intactId="EBI-739870">
        <id>P32321</id>
    </interactant>
    <interactant intactId="EBI-359352">
        <id>P25786</id>
        <label>PSMA1</label>
    </interactant>
    <organismsDiffer>false</organismsDiffer>
    <experiments>3</experiments>
</comment>
<comment type="interaction">
    <interactant intactId="EBI-739870">
        <id>P32321</id>
    </interactant>
    <interactant intactId="EBI-727004">
        <id>O00560</id>
        <label>SDCBP</label>
    </interactant>
    <organismsDiffer>false</organismsDiffer>
    <experiments>6</experiments>
</comment>
<comment type="interaction">
    <interactant intactId="EBI-739870">
        <id>P32321</id>
    </interactant>
    <interactant intactId="EBI-2932492">
        <id>Q99757</id>
        <label>TXN2</label>
    </interactant>
    <organismsDiffer>false</organismsDiffer>
    <experiments>3</experiments>
</comment>
<comment type="interaction">
    <interactant intactId="EBI-739870">
        <id>P32321</id>
    </interactant>
    <interactant intactId="EBI-10180829">
        <id>Q7KZS0</id>
        <label>UBE2I</label>
    </interactant>
    <organismsDiffer>false</organismsDiffer>
    <experiments>3</experiments>
</comment>
<comment type="alternative products">
    <event type="alternative splicing"/>
    <isoform>
        <id>P32321-1</id>
        <name>1</name>
        <sequence type="displayed"/>
    </isoform>
    <isoform>
        <id>P32321-2</id>
        <name>2</name>
        <sequence type="described" ref="VSP_038094"/>
    </isoform>
</comment>
<comment type="similarity">
    <text evidence="7">Belongs to the cytidine and deoxycytidylate deaminase family.</text>
</comment>
<proteinExistence type="evidence at protein level"/>
<gene>
    <name evidence="9" type="primary">DCTD</name>
</gene>
<organism>
    <name type="scientific">Homo sapiens</name>
    <name type="common">Human</name>
    <dbReference type="NCBI Taxonomy" id="9606"/>
    <lineage>
        <taxon>Eukaryota</taxon>
        <taxon>Metazoa</taxon>
        <taxon>Chordata</taxon>
        <taxon>Craniata</taxon>
        <taxon>Vertebrata</taxon>
        <taxon>Euteleostomi</taxon>
        <taxon>Mammalia</taxon>
        <taxon>Eutheria</taxon>
        <taxon>Euarchontoglires</taxon>
        <taxon>Primates</taxon>
        <taxon>Haplorrhini</taxon>
        <taxon>Catarrhini</taxon>
        <taxon>Hominidae</taxon>
        <taxon>Homo</taxon>
    </lineage>
</organism>